<comment type="function">
    <text evidence="2 3">Snake venom phospholipase A2 homolog that lacks enzymatic activity (By similarity). Shows high myotoxin activities and displays edema-inducing activities (By similarity). Has cytotoxic activities against HUVEC cells (LC(50)=12.2 uL) and human lung adenocarcinoma A549 cells (LC(50)=8.5 uL).</text>
</comment>
<comment type="subunit">
    <text evidence="2">Monomer.</text>
</comment>
<comment type="subcellular location">
    <subcellularLocation>
        <location evidence="3">Secreted</location>
    </subcellularLocation>
</comment>
<comment type="tissue specificity">
    <text evidence="5">Expressed by the venom gland.</text>
</comment>
<comment type="mass spectrometry"/>
<comment type="miscellaneous">
    <text evidence="3">Negative results: does not show antimicrobial activity against E.coli and S.aureus and does not produce appreciable hemolysis on human erythrocytes.</text>
</comment>
<comment type="similarity">
    <text evidence="5">Belongs to the phospholipase A2 family. Group II subfamily. S49 sub-subfamily.</text>
</comment>
<comment type="caution">
    <text evidence="5">Does not bind calcium as one of the calcium-binding sites is lost (Asp-&gt;Ser in position 48, which corresponds to 'Ser-49' in the current nomenclature).</text>
</comment>
<proteinExistence type="evidence at protein level"/>
<accession>P0DMT2</accession>
<evidence type="ECO:0000250" key="1">
    <source>
        <dbReference type="UniProtKB" id="P24605"/>
    </source>
</evidence>
<evidence type="ECO:0000250" key="2">
    <source>
        <dbReference type="UniProtKB" id="P48650"/>
    </source>
</evidence>
<evidence type="ECO:0000269" key="3">
    <source>
    </source>
</evidence>
<evidence type="ECO:0000303" key="4">
    <source>
    </source>
</evidence>
<evidence type="ECO:0000305" key="5"/>
<organism>
    <name type="scientific">Echis carinatus sochureki</name>
    <name type="common">Saw-scaled viper</name>
    <dbReference type="NCBI Taxonomy" id="124223"/>
    <lineage>
        <taxon>Eukaryota</taxon>
        <taxon>Metazoa</taxon>
        <taxon>Chordata</taxon>
        <taxon>Craniata</taxon>
        <taxon>Vertebrata</taxon>
        <taxon>Euteleostomi</taxon>
        <taxon>Lepidosauria</taxon>
        <taxon>Squamata</taxon>
        <taxon>Bifurcata</taxon>
        <taxon>Unidentata</taxon>
        <taxon>Episquamata</taxon>
        <taxon>Toxicofera</taxon>
        <taxon>Serpentes</taxon>
        <taxon>Colubroidea</taxon>
        <taxon>Viperidae</taxon>
        <taxon>Viperinae</taxon>
        <taxon>Echis</taxon>
    </lineage>
</organism>
<name>PA2HS_ECHCS</name>
<keyword id="KW-1015">Disulfide bond</keyword>
<keyword id="KW-0959">Myotoxin</keyword>
<keyword id="KW-0964">Secreted</keyword>
<keyword id="KW-0800">Toxin</keyword>
<protein>
    <recommendedName>
        <fullName evidence="4">Phospholipase A2 homolog ECS_00014</fullName>
        <shortName>svPLA2 homolog</shortName>
    </recommendedName>
</protein>
<dbReference type="SMR" id="P0DMT2"/>
<dbReference type="GO" id="GO:0005576">
    <property type="term" value="C:extracellular region"/>
    <property type="evidence" value="ECO:0007669"/>
    <property type="project" value="UniProtKB-SubCell"/>
</dbReference>
<dbReference type="GO" id="GO:0005509">
    <property type="term" value="F:calcium ion binding"/>
    <property type="evidence" value="ECO:0007669"/>
    <property type="project" value="InterPro"/>
</dbReference>
<dbReference type="GO" id="GO:0047498">
    <property type="term" value="F:calcium-dependent phospholipase A2 activity"/>
    <property type="evidence" value="ECO:0007669"/>
    <property type="project" value="TreeGrafter"/>
</dbReference>
<dbReference type="GO" id="GO:0005543">
    <property type="term" value="F:phospholipid binding"/>
    <property type="evidence" value="ECO:0007669"/>
    <property type="project" value="TreeGrafter"/>
</dbReference>
<dbReference type="GO" id="GO:0090729">
    <property type="term" value="F:toxin activity"/>
    <property type="evidence" value="ECO:0007669"/>
    <property type="project" value="UniProtKB-KW"/>
</dbReference>
<dbReference type="GO" id="GO:0050482">
    <property type="term" value="P:arachidonate secretion"/>
    <property type="evidence" value="ECO:0007669"/>
    <property type="project" value="InterPro"/>
</dbReference>
<dbReference type="GO" id="GO:0016042">
    <property type="term" value="P:lipid catabolic process"/>
    <property type="evidence" value="ECO:0007669"/>
    <property type="project" value="InterPro"/>
</dbReference>
<dbReference type="GO" id="GO:0042130">
    <property type="term" value="P:negative regulation of T cell proliferation"/>
    <property type="evidence" value="ECO:0007669"/>
    <property type="project" value="TreeGrafter"/>
</dbReference>
<dbReference type="GO" id="GO:0006644">
    <property type="term" value="P:phospholipid metabolic process"/>
    <property type="evidence" value="ECO:0007669"/>
    <property type="project" value="InterPro"/>
</dbReference>
<dbReference type="CDD" id="cd00125">
    <property type="entry name" value="PLA2c"/>
    <property type="match status" value="1"/>
</dbReference>
<dbReference type="FunFam" id="1.20.90.10:FF:000001">
    <property type="entry name" value="Basic phospholipase A2 homolog"/>
    <property type="match status" value="1"/>
</dbReference>
<dbReference type="Gene3D" id="1.20.90.10">
    <property type="entry name" value="Phospholipase A2 domain"/>
    <property type="match status" value="1"/>
</dbReference>
<dbReference type="InterPro" id="IPR001211">
    <property type="entry name" value="PLipase_A2"/>
</dbReference>
<dbReference type="InterPro" id="IPR033112">
    <property type="entry name" value="PLipase_A2_Asp_AS"/>
</dbReference>
<dbReference type="InterPro" id="IPR016090">
    <property type="entry name" value="PLipase_A2_dom"/>
</dbReference>
<dbReference type="InterPro" id="IPR036444">
    <property type="entry name" value="PLipase_A2_dom_sf"/>
</dbReference>
<dbReference type="InterPro" id="IPR033113">
    <property type="entry name" value="PLipase_A2_His_AS"/>
</dbReference>
<dbReference type="PANTHER" id="PTHR11716">
    <property type="entry name" value="PHOSPHOLIPASE A2 FAMILY MEMBER"/>
    <property type="match status" value="1"/>
</dbReference>
<dbReference type="PANTHER" id="PTHR11716:SF9">
    <property type="entry name" value="PHOSPHOLIPASE A2, MEMBRANE ASSOCIATED"/>
    <property type="match status" value="1"/>
</dbReference>
<dbReference type="Pfam" id="PF00068">
    <property type="entry name" value="Phospholip_A2_1"/>
    <property type="match status" value="1"/>
</dbReference>
<dbReference type="PRINTS" id="PR00389">
    <property type="entry name" value="PHPHLIPASEA2"/>
</dbReference>
<dbReference type="SMART" id="SM00085">
    <property type="entry name" value="PA2c"/>
    <property type="match status" value="1"/>
</dbReference>
<dbReference type="SUPFAM" id="SSF48619">
    <property type="entry name" value="Phospholipase A2, PLA2"/>
    <property type="match status" value="1"/>
</dbReference>
<dbReference type="PROSITE" id="PS00119">
    <property type="entry name" value="PA2_ASP"/>
    <property type="match status" value="1"/>
</dbReference>
<dbReference type="PROSITE" id="PS00118">
    <property type="entry name" value="PA2_HIS"/>
    <property type="match status" value="1"/>
</dbReference>
<feature type="chain" id="PRO_0000432597" description="Phospholipase A2 homolog ECS_00014">
    <location>
        <begin position="1"/>
        <end position="122"/>
    </location>
</feature>
<feature type="region of interest" description="Important for membrane-damaging activities in eukaryotes and bacteria; heparin-binding" evidence="1">
    <location>
        <begin position="105"/>
        <end position="117"/>
    </location>
</feature>
<feature type="disulfide bond" evidence="2">
    <location>
        <begin position="26"/>
        <end position="115"/>
    </location>
</feature>
<feature type="disulfide bond" evidence="2">
    <location>
        <begin position="28"/>
        <end position="44"/>
    </location>
</feature>
<feature type="disulfide bond" evidence="2">
    <location>
        <begin position="43"/>
        <end position="95"/>
    </location>
</feature>
<feature type="disulfide bond" evidence="2">
    <location>
        <begin position="49"/>
        <end position="122"/>
    </location>
</feature>
<feature type="disulfide bond" evidence="2">
    <location>
        <begin position="50"/>
        <end position="88"/>
    </location>
</feature>
<feature type="disulfide bond" evidence="2">
    <location>
        <begin position="57"/>
        <end position="81"/>
    </location>
</feature>
<feature type="disulfide bond" evidence="2">
    <location>
        <begin position="75"/>
        <end position="86"/>
    </location>
</feature>
<sequence>SIVELGKMIIQETGKSPFPSYTSYGCFCGGGERGPPLDATDRCCLAHSCCYDTLPDCSPKTDRYKYKRENGEIICENSTSCKKRICECDKAMAVCLRKNLNTYNKKYTYYPNFWCKGDIEKC</sequence>
<reference key="1">
    <citation type="journal article" date="2013" name="Toxicon">
        <title>Cytotoxic activities of [Ser49]phospholipase A(2) from the venom of the saw-scaled vipers Echis ocellatus, Echis pyramidum leakeyi, Echis carinatus sochureki, and Echis coloratus.</title>
        <authorList>
            <person name="Conlon J.M."/>
            <person name="Attoub S."/>
            <person name="Arafat H."/>
            <person name="Mechkarska M."/>
            <person name="Casewell N.R."/>
            <person name="Harrison R.A."/>
            <person name="Calvete J.J."/>
        </authorList>
    </citation>
    <scope>NUCLEOTIDE SEQUENCE [MRNA]</scope>
    <scope>FUNCTION</scope>
    <scope>MASS SPECTROMETRY</scope>
    <scope>SUBCELLULAR LOCATION</scope>
    <source>
        <tissue>Venom</tissue>
        <tissue>Venom gland</tissue>
    </source>
</reference>